<comment type="function">
    <text>CGA has typical kinetic properties for a glucoamylase, but this bacterial enzyme had higher isomaltose-hydrolyzing activity than other eukaryotic glucoamylases.</text>
</comment>
<comment type="catalytic activity">
    <reaction>
        <text>Hydrolysis of terminal (1-&gt;4)-linked alpha-D-glucose residues successively from non-reducing ends of the chains with release of beta-D-glucose.</text>
        <dbReference type="EC" id="3.2.1.3"/>
    </reaction>
</comment>
<comment type="subcellular location">
    <subcellularLocation>
        <location>Cell membrane</location>
        <topology>Lipid-anchor</topology>
    </subcellularLocation>
</comment>
<comment type="miscellaneous">
    <text>High activity towards 1,6-glycosidic bonds.</text>
</comment>
<comment type="similarity">
    <text evidence="4">Belongs to the glycosyl hydrolase 15 family.</text>
</comment>
<accession>P29761</accession>
<keyword id="KW-0119">Carbohydrate metabolism</keyword>
<keyword id="KW-1003">Cell membrane</keyword>
<keyword id="KW-0903">Direct protein sequencing</keyword>
<keyword id="KW-0326">Glycosidase</keyword>
<keyword id="KW-0378">Hydrolase</keyword>
<keyword id="KW-0449">Lipoprotein</keyword>
<keyword id="KW-0472">Membrane</keyword>
<keyword id="KW-0564">Palmitate</keyword>
<keyword id="KW-0624">Polysaccharide degradation</keyword>
<keyword id="KW-0732">Signal</keyword>
<sequence length="702" mass="78658">MSRKLIKYLPLLVLASSVLSGCSNNVSSIKIDRFNNISAVNGPGEEDTWASAQKQGVGTANNYVSKVWFTLANGAISEVYYPTIDTADVKEIKFIVTDGKSFVSDETKDTISKVEKFTDKSLGYKLVNTDKKGRYRITKEIFTDVKRNSLIMKAKFEALEGSIHDYKLYLAYDPHIKNQGSYNEGYVIKANNNEMLMAKRDNVYTALSSNIGWKGYSIGYYKVNDIMTDLDENKQMTKHYDSARGNIIEGAEIDLKKNSQFEIVLSFGNSEDEAVKASIETLSENYDSLKSAYIDEWEKYCNSLNNFNGKANSLYYNSMMILKASEDKTNKGAYIASLSIPWGDGQGDDNTGGYHLVWSRDLYHVANAFIAAGDVDSANRSLDYLAKVVKDNGMIPQNTWISGKPYWTGIQLDEQADPIILSYRLRRYDLYDSLVKPLADFIIKMGPKTGQERWEEIGGYSPATMAAEVAGLTCAAYIAEQNKDYESAQKYQEKADNWQKLIDNLTYTEHGPLENGQYYIRIAGLPDPNADFTISIANGGGVYDQKEIVDPSFLELVRLGVKSPDDPKILNTLRVVDSTIKVDTPKGPSWYRYNHDGYGEPSKTELYHGAGKGRLWPLLTGERGMYEIAAGKDATPYLKAMENFANEGGIISEQVWEDTGLPTDSASPLNWAHAEYVVLFPSNIEHKVLDMPDIVYKRYVAK</sequence>
<proteinExistence type="evidence at protein level"/>
<protein>
    <recommendedName>
        <fullName>Glucoamylase</fullName>
        <ecNumber>3.2.1.3</ecNumber>
    </recommendedName>
    <alternativeName>
        <fullName>1,4-alpha-D-glucan glucohydrolase</fullName>
    </alternativeName>
    <alternativeName>
        <fullName>Glucan 1,4-alpha-glucosidase</fullName>
    </alternativeName>
</protein>
<reference key="1">
    <citation type="journal article" date="1992" name="Eur. J. Biochem.">
        <title>Molecular cloning of a glucoamylase gene from a thermophilic Clostridium and kinetics of the cloned enzyme.</title>
        <authorList>
            <person name="Ohnishi H."/>
            <person name="Kitamura H."/>
            <person name="Minowa T."/>
            <person name="Sakai H."/>
            <person name="Ohta T."/>
        </authorList>
    </citation>
    <scope>NUCLEOTIDE SEQUENCE [GENOMIC DNA]</scope>
    <scope>PARTIAL PROTEIN SEQUENCE</scope>
</reference>
<evidence type="ECO:0000250" key="1"/>
<evidence type="ECO:0000255" key="2">
    <source>
        <dbReference type="PROSITE-ProRule" id="PRU00303"/>
    </source>
</evidence>
<evidence type="ECO:0000255" key="3">
    <source>
        <dbReference type="PROSITE-ProRule" id="PRU10051"/>
    </source>
</evidence>
<evidence type="ECO:0000305" key="4"/>
<organism>
    <name type="scientific">Clostridium sp. (strain G0005)</name>
    <dbReference type="NCBI Taxonomy" id="72582"/>
    <lineage>
        <taxon>Bacteria</taxon>
        <taxon>Bacillati</taxon>
        <taxon>Bacillota</taxon>
        <taxon>Clostridia</taxon>
        <taxon>Eubacteriales</taxon>
        <taxon>Clostridiaceae</taxon>
        <taxon>Clostridium</taxon>
    </lineage>
</organism>
<feature type="signal peptide" evidence="2">
    <location>
        <begin position="1"/>
        <end position="21"/>
    </location>
</feature>
<feature type="chain" id="PRO_0000001481" description="Glucoamylase">
    <location>
        <begin position="22"/>
        <end position="702"/>
    </location>
</feature>
<feature type="active site" description="Proton acceptor" evidence="3">
    <location>
        <position position="452"/>
    </location>
</feature>
<feature type="active site" description="Proton donor" evidence="3">
    <location>
        <position position="455"/>
    </location>
</feature>
<feature type="binding site" evidence="1">
    <location>
        <position position="342"/>
    </location>
    <ligand>
        <name>substrate</name>
    </ligand>
</feature>
<feature type="lipid moiety-binding region" description="N-palmitoyl cysteine" evidence="4">
    <location>
        <position position="22"/>
    </location>
</feature>
<feature type="lipid moiety-binding region" description="S-diacylglycerol cysteine" evidence="4">
    <location>
        <position position="22"/>
    </location>
</feature>
<dbReference type="EC" id="3.2.1.3"/>
<dbReference type="EMBL" id="D12818">
    <property type="protein sequence ID" value="BAA02251.1"/>
    <property type="molecule type" value="Genomic_DNA"/>
</dbReference>
<dbReference type="SMR" id="P29761"/>
<dbReference type="CAZy" id="GH15">
    <property type="family name" value="Glycoside Hydrolase Family 15"/>
</dbReference>
<dbReference type="SABIO-RK" id="P29761"/>
<dbReference type="GO" id="GO:0005886">
    <property type="term" value="C:plasma membrane"/>
    <property type="evidence" value="ECO:0007669"/>
    <property type="project" value="UniProtKB-SubCell"/>
</dbReference>
<dbReference type="GO" id="GO:0030246">
    <property type="term" value="F:carbohydrate binding"/>
    <property type="evidence" value="ECO:0007669"/>
    <property type="project" value="InterPro"/>
</dbReference>
<dbReference type="GO" id="GO:0004339">
    <property type="term" value="F:glucan 1,4-alpha-glucosidase activity"/>
    <property type="evidence" value="ECO:0007669"/>
    <property type="project" value="UniProtKB-EC"/>
</dbReference>
<dbReference type="GO" id="GO:0016757">
    <property type="term" value="F:glycosyltransferase activity"/>
    <property type="evidence" value="ECO:0007669"/>
    <property type="project" value="UniProtKB-ARBA"/>
</dbReference>
<dbReference type="GO" id="GO:0000272">
    <property type="term" value="P:polysaccharide catabolic process"/>
    <property type="evidence" value="ECO:0007669"/>
    <property type="project" value="UniProtKB-KW"/>
</dbReference>
<dbReference type="CDD" id="cd07430">
    <property type="entry name" value="GH15_N"/>
    <property type="match status" value="1"/>
</dbReference>
<dbReference type="Gene3D" id="1.50.10.10">
    <property type="match status" value="1"/>
</dbReference>
<dbReference type="Gene3D" id="2.70.98.10">
    <property type="match status" value="1"/>
</dbReference>
<dbReference type="InterPro" id="IPR008928">
    <property type="entry name" value="6-hairpin_glycosidase_sf"/>
</dbReference>
<dbReference type="InterPro" id="IPR012341">
    <property type="entry name" value="6hp_glycosidase-like_sf"/>
</dbReference>
<dbReference type="InterPro" id="IPR011013">
    <property type="entry name" value="Gal_mutarotase_sf_dom"/>
</dbReference>
<dbReference type="InterPro" id="IPR014718">
    <property type="entry name" value="GH-type_carb-bd"/>
</dbReference>
<dbReference type="InterPro" id="IPR011613">
    <property type="entry name" value="GH15-like"/>
</dbReference>
<dbReference type="InterPro" id="IPR046966">
    <property type="entry name" value="Glucoamylase_active_site"/>
</dbReference>
<dbReference type="InterPro" id="IPR006425">
    <property type="entry name" value="Glucoamylase_bac"/>
</dbReference>
<dbReference type="InterPro" id="IPR015220">
    <property type="entry name" value="Glucodextranase_N"/>
</dbReference>
<dbReference type="NCBIfam" id="TIGR01535">
    <property type="entry name" value="glucan_glucosid"/>
    <property type="match status" value="1"/>
</dbReference>
<dbReference type="PANTHER" id="PTHR31616:SF0">
    <property type="entry name" value="GLUCAN 1,4-ALPHA-GLUCOSIDASE"/>
    <property type="match status" value="1"/>
</dbReference>
<dbReference type="PANTHER" id="PTHR31616">
    <property type="entry name" value="TREHALASE"/>
    <property type="match status" value="1"/>
</dbReference>
<dbReference type="Pfam" id="PF09137">
    <property type="entry name" value="Glucodextran_N"/>
    <property type="match status" value="1"/>
</dbReference>
<dbReference type="Pfam" id="PF00723">
    <property type="entry name" value="Glyco_hydro_15"/>
    <property type="match status" value="1"/>
</dbReference>
<dbReference type="SUPFAM" id="SSF74650">
    <property type="entry name" value="Galactose mutarotase-like"/>
    <property type="match status" value="1"/>
</dbReference>
<dbReference type="SUPFAM" id="SSF48208">
    <property type="entry name" value="Six-hairpin glycosidases"/>
    <property type="match status" value="1"/>
</dbReference>
<dbReference type="PROSITE" id="PS00820">
    <property type="entry name" value="GLUCOAMYLASE"/>
    <property type="match status" value="1"/>
</dbReference>
<dbReference type="PROSITE" id="PS51257">
    <property type="entry name" value="PROKAR_LIPOPROTEIN"/>
    <property type="match status" value="1"/>
</dbReference>
<gene>
    <name type="primary">cga</name>
</gene>
<name>AMYG_CLOS0</name>